<name>FTHS_LACDA</name>
<dbReference type="EC" id="6.3.4.3" evidence="1"/>
<dbReference type="EMBL" id="CR954253">
    <property type="protein sequence ID" value="CAI97822.1"/>
    <property type="status" value="ALT_INIT"/>
    <property type="molecule type" value="Genomic_DNA"/>
</dbReference>
<dbReference type="RefSeq" id="WP_003619676.1">
    <property type="nucleotide sequence ID" value="NZ_JQAV01000013.1"/>
</dbReference>
<dbReference type="SMR" id="Q1GA94"/>
<dbReference type="STRING" id="390333.Ldb1020"/>
<dbReference type="KEGG" id="ldb:Ldb1020"/>
<dbReference type="PATRIC" id="fig|390333.13.peg.669"/>
<dbReference type="eggNOG" id="COG2759">
    <property type="taxonomic scope" value="Bacteria"/>
</dbReference>
<dbReference type="HOGENOM" id="CLU_003601_3_3_9"/>
<dbReference type="BioCyc" id="LDEL390333:LDB_RS04470-MONOMER"/>
<dbReference type="UniPathway" id="UPA00193"/>
<dbReference type="Proteomes" id="UP000001259">
    <property type="component" value="Chromosome"/>
</dbReference>
<dbReference type="GO" id="GO:0005524">
    <property type="term" value="F:ATP binding"/>
    <property type="evidence" value="ECO:0007669"/>
    <property type="project" value="UniProtKB-UniRule"/>
</dbReference>
<dbReference type="GO" id="GO:0004329">
    <property type="term" value="F:formate-tetrahydrofolate ligase activity"/>
    <property type="evidence" value="ECO:0007669"/>
    <property type="project" value="UniProtKB-UniRule"/>
</dbReference>
<dbReference type="GO" id="GO:0035999">
    <property type="term" value="P:tetrahydrofolate interconversion"/>
    <property type="evidence" value="ECO:0007669"/>
    <property type="project" value="UniProtKB-UniRule"/>
</dbReference>
<dbReference type="CDD" id="cd00477">
    <property type="entry name" value="FTHFS"/>
    <property type="match status" value="1"/>
</dbReference>
<dbReference type="FunFam" id="3.30.1510.10:FF:000001">
    <property type="entry name" value="Formate--tetrahydrofolate ligase"/>
    <property type="match status" value="1"/>
</dbReference>
<dbReference type="Gene3D" id="3.30.1510.10">
    <property type="entry name" value="Domain 2, N(10)-formyltetrahydrofolate synthetase"/>
    <property type="match status" value="1"/>
</dbReference>
<dbReference type="Gene3D" id="3.10.410.10">
    <property type="entry name" value="Formyltetrahydrofolate synthetase, domain 3"/>
    <property type="match status" value="1"/>
</dbReference>
<dbReference type="Gene3D" id="3.40.50.300">
    <property type="entry name" value="P-loop containing nucleotide triphosphate hydrolases"/>
    <property type="match status" value="1"/>
</dbReference>
<dbReference type="HAMAP" id="MF_01543">
    <property type="entry name" value="FTHFS"/>
    <property type="match status" value="1"/>
</dbReference>
<dbReference type="InterPro" id="IPR000559">
    <property type="entry name" value="Formate_THF_ligase"/>
</dbReference>
<dbReference type="InterPro" id="IPR020628">
    <property type="entry name" value="Formate_THF_ligase_CS"/>
</dbReference>
<dbReference type="InterPro" id="IPR027417">
    <property type="entry name" value="P-loop_NTPase"/>
</dbReference>
<dbReference type="NCBIfam" id="NF010030">
    <property type="entry name" value="PRK13505.1"/>
    <property type="match status" value="1"/>
</dbReference>
<dbReference type="Pfam" id="PF01268">
    <property type="entry name" value="FTHFS"/>
    <property type="match status" value="1"/>
</dbReference>
<dbReference type="SUPFAM" id="SSF52540">
    <property type="entry name" value="P-loop containing nucleoside triphosphate hydrolases"/>
    <property type="match status" value="1"/>
</dbReference>
<dbReference type="PROSITE" id="PS00721">
    <property type="entry name" value="FTHFS_1"/>
    <property type="match status" value="1"/>
</dbReference>
<sequence length="559" mass="60503">MVKSDIEIAQAAEELPITDVAAKLGLTSQDLEPYGYDKAKVNWQAIKRSEENGHLGKLILVTSISPTPAGEGKSTMTIGIGDAINNQLGKKTVIALREPSMGPVFGMKGGAAGGGYAQVIPMEDINLHFTGDMHALTSAIDNLSALVDNYIYQGNELGLDPEKIVIKRGLDVNDRTLRKVTIGQGSKFNGVERPASFQLTVGHELMAILCLSKDIADLKERIGKVLVGYTYEDEPVFVKDLGFQGAIAALLSTALKPNLVQTLEHTPAFVHGGPFANIAHGNNSILSTNLALHLSDYVLSEAGFGSDLGGQKFLDFVSTKLEKKPDAAVVVATVRALKYQAEKSTDHLKEENLDSLKEGFANLDRHMNNVRSYNIPVLVVINKFPTDTEAELDLLKSLIEEQGFPCEIVTAHDEGSKGAKAAAEKIVELADKSDYEIKRSYDLDDDLETKIEKVAKRIYHAADVEYTDKAKDQLVKLKKMGKDKLPVIIAKTQYSFTDNVKELGAPTGFTLHVKGLSLRNGAGFVVVSTGHILDMPGLPKHPAALDIDVDETGKISGLF</sequence>
<gene>
    <name evidence="1" type="primary">fhs</name>
    <name type="ordered locus">Ldb1020</name>
</gene>
<reference key="1">
    <citation type="journal article" date="2006" name="Proc. Natl. Acad. Sci. U.S.A.">
        <title>The complete genome sequence of Lactobacillus bulgaricus reveals extensive and ongoing reductive evolution.</title>
        <authorList>
            <person name="van de Guchte M."/>
            <person name="Penaud S."/>
            <person name="Grimaldi C."/>
            <person name="Barbe V."/>
            <person name="Bryson K."/>
            <person name="Nicolas P."/>
            <person name="Robert C."/>
            <person name="Oztas S."/>
            <person name="Mangenot S."/>
            <person name="Couloux A."/>
            <person name="Loux V."/>
            <person name="Dervyn R."/>
            <person name="Bossy R."/>
            <person name="Bolotin A."/>
            <person name="Batto J.-M."/>
            <person name="Walunas T."/>
            <person name="Gibrat J.-F."/>
            <person name="Bessieres P."/>
            <person name="Weissenbach J."/>
            <person name="Ehrlich S.D."/>
            <person name="Maguin E."/>
        </authorList>
    </citation>
    <scope>NUCLEOTIDE SEQUENCE [LARGE SCALE GENOMIC DNA]</scope>
    <source>
        <strain>ATCC 11842 / DSM 20081 / BCRC 10696 / JCM 1002 / NBRC 13953 / NCIMB 11778 / NCTC 12712 / WDCM 00102 / Lb 14</strain>
    </source>
</reference>
<keyword id="KW-0067">ATP-binding</keyword>
<keyword id="KW-0436">Ligase</keyword>
<keyword id="KW-0547">Nucleotide-binding</keyword>
<keyword id="KW-0554">One-carbon metabolism</keyword>
<keyword id="KW-1185">Reference proteome</keyword>
<evidence type="ECO:0000255" key="1">
    <source>
        <dbReference type="HAMAP-Rule" id="MF_01543"/>
    </source>
</evidence>
<evidence type="ECO:0000305" key="2"/>
<protein>
    <recommendedName>
        <fullName evidence="1">Formate--tetrahydrofolate ligase</fullName>
        <ecNumber evidence="1">6.3.4.3</ecNumber>
    </recommendedName>
    <alternativeName>
        <fullName evidence="1">Formyltetrahydrofolate synthetase</fullName>
        <shortName evidence="1">FHS</shortName>
        <shortName evidence="1">FTHFS</shortName>
    </alternativeName>
</protein>
<organism>
    <name type="scientific">Lactobacillus delbrueckii subsp. bulgaricus (strain ATCC 11842 / DSM 20081 / BCRC 10696 / JCM 1002 / NBRC 13953 / NCIMB 11778 / NCTC 12712 / WDCM 00102 / Lb 14)</name>
    <dbReference type="NCBI Taxonomy" id="390333"/>
    <lineage>
        <taxon>Bacteria</taxon>
        <taxon>Bacillati</taxon>
        <taxon>Bacillota</taxon>
        <taxon>Bacilli</taxon>
        <taxon>Lactobacillales</taxon>
        <taxon>Lactobacillaceae</taxon>
        <taxon>Lactobacillus</taxon>
    </lineage>
</organism>
<comment type="catalytic activity">
    <reaction evidence="1">
        <text>(6S)-5,6,7,8-tetrahydrofolate + formate + ATP = (6R)-10-formyltetrahydrofolate + ADP + phosphate</text>
        <dbReference type="Rhea" id="RHEA:20221"/>
        <dbReference type="ChEBI" id="CHEBI:15740"/>
        <dbReference type="ChEBI" id="CHEBI:30616"/>
        <dbReference type="ChEBI" id="CHEBI:43474"/>
        <dbReference type="ChEBI" id="CHEBI:57453"/>
        <dbReference type="ChEBI" id="CHEBI:195366"/>
        <dbReference type="ChEBI" id="CHEBI:456216"/>
        <dbReference type="EC" id="6.3.4.3"/>
    </reaction>
</comment>
<comment type="pathway">
    <text evidence="1">One-carbon metabolism; tetrahydrofolate interconversion.</text>
</comment>
<comment type="similarity">
    <text evidence="1">Belongs to the formate--tetrahydrofolate ligase family.</text>
</comment>
<comment type="sequence caution" evidence="2">
    <conflict type="erroneous initiation">
        <sequence resource="EMBL-CDS" id="CAI97822"/>
    </conflict>
</comment>
<proteinExistence type="inferred from homology"/>
<feature type="chain" id="PRO_0000293039" description="Formate--tetrahydrofolate ligase">
    <location>
        <begin position="1"/>
        <end position="559"/>
    </location>
</feature>
<feature type="binding site" evidence="1">
    <location>
        <begin position="67"/>
        <end position="74"/>
    </location>
    <ligand>
        <name>ATP</name>
        <dbReference type="ChEBI" id="CHEBI:30616"/>
    </ligand>
</feature>
<accession>Q1GA94</accession>